<sequence>MEITIVKGDITEQEVDVIVNAANSGLLGGGGVDGAIHQAAGPDLLKECQEVINRIGSCPAGEAVITSAGDLKATYIIHAVGPIWKDGEHQEANKLASCYWKALDLAAGKDLTSIAFPNISTGVYGFPKKLAAEVALYTVRKWAEEEYDTSIKEIRFVCFDEENLKLYNKLINSEVV</sequence>
<name>Y2759_LISMO</name>
<evidence type="ECO:0000255" key="1">
    <source>
        <dbReference type="PROSITE-ProRule" id="PRU00490"/>
    </source>
</evidence>
<evidence type="ECO:0000305" key="2"/>
<dbReference type="EMBL" id="AL591984">
    <property type="protein sequence ID" value="CAD00972.1"/>
    <property type="molecule type" value="Genomic_DNA"/>
</dbReference>
<dbReference type="PIR" id="AF1419">
    <property type="entry name" value="AF1419"/>
</dbReference>
<dbReference type="RefSeq" id="NP_466281.1">
    <property type="nucleotide sequence ID" value="NC_003210.1"/>
</dbReference>
<dbReference type="RefSeq" id="WP_009930801.1">
    <property type="nucleotide sequence ID" value="NZ_CP149495.1"/>
</dbReference>
<dbReference type="SMR" id="Q8Y3S3"/>
<dbReference type="STRING" id="169963.gene:17595476"/>
<dbReference type="PaxDb" id="169963-lmo2759"/>
<dbReference type="EnsemblBacteria" id="CAD00972">
    <property type="protein sequence ID" value="CAD00972"/>
    <property type="gene ID" value="CAD00972"/>
</dbReference>
<dbReference type="GeneID" id="986677"/>
<dbReference type="KEGG" id="lmo:lmo2759"/>
<dbReference type="PATRIC" id="fig|169963.11.peg.2827"/>
<dbReference type="eggNOG" id="COG2110">
    <property type="taxonomic scope" value="Bacteria"/>
</dbReference>
<dbReference type="HOGENOM" id="CLU_046550_5_1_9"/>
<dbReference type="OrthoDB" id="6194521at2"/>
<dbReference type="PhylomeDB" id="Q8Y3S3"/>
<dbReference type="BioCyc" id="LMON169963:LMO2759-MONOMER"/>
<dbReference type="Proteomes" id="UP000000817">
    <property type="component" value="Chromosome"/>
</dbReference>
<dbReference type="CDD" id="cd02908">
    <property type="entry name" value="Macro_OAADPr_deacetylase"/>
    <property type="match status" value="1"/>
</dbReference>
<dbReference type="Gene3D" id="3.40.220.10">
    <property type="entry name" value="Leucine Aminopeptidase, subunit E, domain 1"/>
    <property type="match status" value="1"/>
</dbReference>
<dbReference type="InterPro" id="IPR002589">
    <property type="entry name" value="Macro_dom"/>
</dbReference>
<dbReference type="InterPro" id="IPR043472">
    <property type="entry name" value="Macro_dom-like"/>
</dbReference>
<dbReference type="NCBIfam" id="NF001663">
    <property type="entry name" value="PRK00431.1-4"/>
    <property type="match status" value="1"/>
</dbReference>
<dbReference type="NCBIfam" id="NF001664">
    <property type="entry name" value="PRK00431.1-6"/>
    <property type="match status" value="1"/>
</dbReference>
<dbReference type="PANTHER" id="PTHR11106">
    <property type="entry name" value="GANGLIOSIDE INDUCED DIFFERENTIATION ASSOCIATED PROTEIN 2-RELATED"/>
    <property type="match status" value="1"/>
</dbReference>
<dbReference type="PANTHER" id="PTHR11106:SF27">
    <property type="entry name" value="MACRO DOMAIN-CONTAINING PROTEIN"/>
    <property type="match status" value="1"/>
</dbReference>
<dbReference type="Pfam" id="PF01661">
    <property type="entry name" value="Macro"/>
    <property type="match status" value="1"/>
</dbReference>
<dbReference type="SMART" id="SM00506">
    <property type="entry name" value="A1pp"/>
    <property type="match status" value="1"/>
</dbReference>
<dbReference type="SUPFAM" id="SSF52949">
    <property type="entry name" value="Macro domain-like"/>
    <property type="match status" value="1"/>
</dbReference>
<dbReference type="PROSITE" id="PS51154">
    <property type="entry name" value="MACRO"/>
    <property type="match status" value="1"/>
</dbReference>
<keyword id="KW-1185">Reference proteome</keyword>
<accession>Q8Y3S3</accession>
<gene>
    <name type="ordered locus">lmo2759</name>
</gene>
<reference key="1">
    <citation type="journal article" date="2001" name="Science">
        <title>Comparative genomics of Listeria species.</title>
        <authorList>
            <person name="Glaser P."/>
            <person name="Frangeul L."/>
            <person name="Buchrieser C."/>
            <person name="Rusniok C."/>
            <person name="Amend A."/>
            <person name="Baquero F."/>
            <person name="Berche P."/>
            <person name="Bloecker H."/>
            <person name="Brandt P."/>
            <person name="Chakraborty T."/>
            <person name="Charbit A."/>
            <person name="Chetouani F."/>
            <person name="Couve E."/>
            <person name="de Daruvar A."/>
            <person name="Dehoux P."/>
            <person name="Domann E."/>
            <person name="Dominguez-Bernal G."/>
            <person name="Duchaud E."/>
            <person name="Durant L."/>
            <person name="Dussurget O."/>
            <person name="Entian K.-D."/>
            <person name="Fsihi H."/>
            <person name="Garcia-del Portillo F."/>
            <person name="Garrido P."/>
            <person name="Gautier L."/>
            <person name="Goebel W."/>
            <person name="Gomez-Lopez N."/>
            <person name="Hain T."/>
            <person name="Hauf J."/>
            <person name="Jackson D."/>
            <person name="Jones L.-M."/>
            <person name="Kaerst U."/>
            <person name="Kreft J."/>
            <person name="Kuhn M."/>
            <person name="Kunst F."/>
            <person name="Kurapkat G."/>
            <person name="Madueno E."/>
            <person name="Maitournam A."/>
            <person name="Mata Vicente J."/>
            <person name="Ng E."/>
            <person name="Nedjari H."/>
            <person name="Nordsiek G."/>
            <person name="Novella S."/>
            <person name="de Pablos B."/>
            <person name="Perez-Diaz J.-C."/>
            <person name="Purcell R."/>
            <person name="Remmel B."/>
            <person name="Rose M."/>
            <person name="Schlueter T."/>
            <person name="Simoes N."/>
            <person name="Tierrez A."/>
            <person name="Vazquez-Boland J.-A."/>
            <person name="Voss H."/>
            <person name="Wehland J."/>
            <person name="Cossart P."/>
        </authorList>
    </citation>
    <scope>NUCLEOTIDE SEQUENCE [LARGE SCALE GENOMIC DNA]</scope>
    <source>
        <strain>ATCC BAA-679 / EGD-e</strain>
    </source>
</reference>
<organism>
    <name type="scientific">Listeria monocytogenes serovar 1/2a (strain ATCC BAA-679 / EGD-e)</name>
    <dbReference type="NCBI Taxonomy" id="169963"/>
    <lineage>
        <taxon>Bacteria</taxon>
        <taxon>Bacillati</taxon>
        <taxon>Bacillota</taxon>
        <taxon>Bacilli</taxon>
        <taxon>Bacillales</taxon>
        <taxon>Listeriaceae</taxon>
        <taxon>Listeria</taxon>
    </lineage>
</organism>
<proteinExistence type="inferred from homology"/>
<feature type="chain" id="PRO_0000089200" description="Macro domain-containing protein lmo2759">
    <location>
        <begin position="1"/>
        <end position="176"/>
    </location>
</feature>
<feature type="domain" description="Macro" evidence="1">
    <location>
        <begin position="1"/>
        <end position="175"/>
    </location>
</feature>
<protein>
    <recommendedName>
        <fullName>Macro domain-containing protein lmo2759</fullName>
    </recommendedName>
</protein>
<comment type="similarity">
    <text evidence="2">Belongs to the MacroD-type family.</text>
</comment>